<feature type="chain" id="PRO_0000334962" description="Ribonuclease HII">
    <location>
        <begin position="1"/>
        <end position="188"/>
    </location>
</feature>
<feature type="domain" description="RNase H type-2" evidence="2">
    <location>
        <begin position="6"/>
        <end position="188"/>
    </location>
</feature>
<feature type="binding site" evidence="1">
    <location>
        <position position="12"/>
    </location>
    <ligand>
        <name>a divalent metal cation</name>
        <dbReference type="ChEBI" id="CHEBI:60240"/>
    </ligand>
</feature>
<feature type="binding site" evidence="1">
    <location>
        <position position="13"/>
    </location>
    <ligand>
        <name>a divalent metal cation</name>
        <dbReference type="ChEBI" id="CHEBI:60240"/>
    </ligand>
</feature>
<feature type="binding site" evidence="1">
    <location>
        <position position="99"/>
    </location>
    <ligand>
        <name>a divalent metal cation</name>
        <dbReference type="ChEBI" id="CHEBI:60240"/>
    </ligand>
</feature>
<accession>A6QCJ3</accession>
<sequence>MQNETKPLCGIDEAGRGPLAGALVMAGVVLKKPIDGLMDSKKLTEKRREALYTIVLENAEYHIVSFSAKEVDDLGISKCLQKGLQSIQNALDGCKYLFDGNSTFGVDNVSTMVKADDKVPEVSAASILAKVTRDREMIKMAEIYPEYGFEKHKGYGTKAHIEALMKYDRCEIHRRSFRVKGLDEPTLF</sequence>
<comment type="function">
    <text evidence="1">Endonuclease that specifically degrades the RNA of RNA-DNA hybrids.</text>
</comment>
<comment type="catalytic activity">
    <reaction evidence="1">
        <text>Endonucleolytic cleavage to 5'-phosphomonoester.</text>
        <dbReference type="EC" id="3.1.26.4"/>
    </reaction>
</comment>
<comment type="cofactor">
    <cofactor evidence="1">
        <name>Mn(2+)</name>
        <dbReference type="ChEBI" id="CHEBI:29035"/>
    </cofactor>
    <cofactor evidence="1">
        <name>Mg(2+)</name>
        <dbReference type="ChEBI" id="CHEBI:18420"/>
    </cofactor>
    <text evidence="1">Manganese or magnesium. Binds 1 divalent metal ion per monomer in the absence of substrate. May bind a second metal ion after substrate binding.</text>
</comment>
<comment type="subcellular location">
    <subcellularLocation>
        <location evidence="1">Cytoplasm</location>
    </subcellularLocation>
</comment>
<comment type="similarity">
    <text evidence="1">Belongs to the RNase HII family.</text>
</comment>
<gene>
    <name evidence="1" type="primary">rnhB</name>
    <name type="ordered locus">SUN_2262</name>
</gene>
<reference key="1">
    <citation type="journal article" date="2007" name="Proc. Natl. Acad. Sci. U.S.A.">
        <title>Deep-sea vent epsilon-proteobacterial genomes provide insights into emergence of pathogens.</title>
        <authorList>
            <person name="Nakagawa S."/>
            <person name="Takaki Y."/>
            <person name="Shimamura S."/>
            <person name="Reysenbach A.-L."/>
            <person name="Takai K."/>
            <person name="Horikoshi K."/>
        </authorList>
    </citation>
    <scope>NUCLEOTIDE SEQUENCE [LARGE SCALE GENOMIC DNA]</scope>
    <source>
        <strain>NBC37-1</strain>
    </source>
</reference>
<evidence type="ECO:0000255" key="1">
    <source>
        <dbReference type="HAMAP-Rule" id="MF_00052"/>
    </source>
</evidence>
<evidence type="ECO:0000255" key="2">
    <source>
        <dbReference type="PROSITE-ProRule" id="PRU01319"/>
    </source>
</evidence>
<protein>
    <recommendedName>
        <fullName evidence="1">Ribonuclease HII</fullName>
        <shortName evidence="1">RNase HII</shortName>
        <ecNumber evidence="1">3.1.26.4</ecNumber>
    </recommendedName>
</protein>
<proteinExistence type="inferred from homology"/>
<organism>
    <name type="scientific">Sulfurovum sp. (strain NBC37-1)</name>
    <dbReference type="NCBI Taxonomy" id="387093"/>
    <lineage>
        <taxon>Bacteria</taxon>
        <taxon>Pseudomonadati</taxon>
        <taxon>Campylobacterota</taxon>
        <taxon>Epsilonproteobacteria</taxon>
        <taxon>Campylobacterales</taxon>
        <taxon>Sulfurovaceae</taxon>
        <taxon>Sulfurovum</taxon>
    </lineage>
</organism>
<dbReference type="EC" id="3.1.26.4" evidence="1"/>
<dbReference type="EMBL" id="AP009179">
    <property type="protein sequence ID" value="BAF73202.1"/>
    <property type="molecule type" value="Genomic_DNA"/>
</dbReference>
<dbReference type="RefSeq" id="WP_012084040.1">
    <property type="nucleotide sequence ID" value="NC_009663.1"/>
</dbReference>
<dbReference type="SMR" id="A6QCJ3"/>
<dbReference type="STRING" id="387093.SUN_2262"/>
<dbReference type="KEGG" id="sun:SUN_2262"/>
<dbReference type="eggNOG" id="COG0164">
    <property type="taxonomic scope" value="Bacteria"/>
</dbReference>
<dbReference type="HOGENOM" id="CLU_036532_3_1_7"/>
<dbReference type="OrthoDB" id="9803420at2"/>
<dbReference type="Proteomes" id="UP000006378">
    <property type="component" value="Chromosome"/>
</dbReference>
<dbReference type="GO" id="GO:0005737">
    <property type="term" value="C:cytoplasm"/>
    <property type="evidence" value="ECO:0007669"/>
    <property type="project" value="UniProtKB-SubCell"/>
</dbReference>
<dbReference type="GO" id="GO:0032299">
    <property type="term" value="C:ribonuclease H2 complex"/>
    <property type="evidence" value="ECO:0007669"/>
    <property type="project" value="TreeGrafter"/>
</dbReference>
<dbReference type="GO" id="GO:0030145">
    <property type="term" value="F:manganese ion binding"/>
    <property type="evidence" value="ECO:0007669"/>
    <property type="project" value="UniProtKB-UniRule"/>
</dbReference>
<dbReference type="GO" id="GO:0003723">
    <property type="term" value="F:RNA binding"/>
    <property type="evidence" value="ECO:0007669"/>
    <property type="project" value="InterPro"/>
</dbReference>
<dbReference type="GO" id="GO:0004523">
    <property type="term" value="F:RNA-DNA hybrid ribonuclease activity"/>
    <property type="evidence" value="ECO:0007669"/>
    <property type="project" value="UniProtKB-UniRule"/>
</dbReference>
<dbReference type="GO" id="GO:0043137">
    <property type="term" value="P:DNA replication, removal of RNA primer"/>
    <property type="evidence" value="ECO:0007669"/>
    <property type="project" value="TreeGrafter"/>
</dbReference>
<dbReference type="GO" id="GO:0006298">
    <property type="term" value="P:mismatch repair"/>
    <property type="evidence" value="ECO:0007669"/>
    <property type="project" value="TreeGrafter"/>
</dbReference>
<dbReference type="CDD" id="cd07182">
    <property type="entry name" value="RNase_HII_bacteria_HII_like"/>
    <property type="match status" value="1"/>
</dbReference>
<dbReference type="Gene3D" id="3.30.420.10">
    <property type="entry name" value="Ribonuclease H-like superfamily/Ribonuclease H"/>
    <property type="match status" value="1"/>
</dbReference>
<dbReference type="HAMAP" id="MF_00052_B">
    <property type="entry name" value="RNase_HII_B"/>
    <property type="match status" value="1"/>
</dbReference>
<dbReference type="InterPro" id="IPR022898">
    <property type="entry name" value="RNase_HII"/>
</dbReference>
<dbReference type="InterPro" id="IPR001352">
    <property type="entry name" value="RNase_HII/HIII"/>
</dbReference>
<dbReference type="InterPro" id="IPR024567">
    <property type="entry name" value="RNase_HII/HIII_dom"/>
</dbReference>
<dbReference type="InterPro" id="IPR012337">
    <property type="entry name" value="RNaseH-like_sf"/>
</dbReference>
<dbReference type="InterPro" id="IPR036397">
    <property type="entry name" value="RNaseH_sf"/>
</dbReference>
<dbReference type="NCBIfam" id="NF000595">
    <property type="entry name" value="PRK00015.1-3"/>
    <property type="match status" value="1"/>
</dbReference>
<dbReference type="PANTHER" id="PTHR10954">
    <property type="entry name" value="RIBONUCLEASE H2 SUBUNIT A"/>
    <property type="match status" value="1"/>
</dbReference>
<dbReference type="PANTHER" id="PTHR10954:SF18">
    <property type="entry name" value="RIBONUCLEASE HII"/>
    <property type="match status" value="1"/>
</dbReference>
<dbReference type="Pfam" id="PF01351">
    <property type="entry name" value="RNase_HII"/>
    <property type="match status" value="1"/>
</dbReference>
<dbReference type="SUPFAM" id="SSF53098">
    <property type="entry name" value="Ribonuclease H-like"/>
    <property type="match status" value="1"/>
</dbReference>
<dbReference type="PROSITE" id="PS51975">
    <property type="entry name" value="RNASE_H_2"/>
    <property type="match status" value="1"/>
</dbReference>
<keyword id="KW-0963">Cytoplasm</keyword>
<keyword id="KW-0255">Endonuclease</keyword>
<keyword id="KW-0378">Hydrolase</keyword>
<keyword id="KW-0464">Manganese</keyword>
<keyword id="KW-0479">Metal-binding</keyword>
<keyword id="KW-0540">Nuclease</keyword>
<name>RNH2_SULNB</name>